<accession>A9R007</accession>
<evidence type="ECO:0000255" key="1">
    <source>
        <dbReference type="HAMAP-Rule" id="MF_00161"/>
    </source>
</evidence>
<sequence>MNKPICSTGLRWLWLAVVVVILDISSKQWVMAHFALYESVPLIPFFNLTYAQNFGAAFSFLADKSGWQRWFFAGIAIGISVVLMVMMYRSTAKQRLINCAYALIIGGALGNLYDRLVHGAVNDFLDFYINNWHFPTFNLADVAICIGAALVIFEGFLSPVEKNAVNNDE</sequence>
<dbReference type="EC" id="3.4.23.36" evidence="1"/>
<dbReference type="EMBL" id="CP000901">
    <property type="protein sequence ID" value="ABX86033.1"/>
    <property type="molecule type" value="Genomic_DNA"/>
</dbReference>
<dbReference type="RefSeq" id="WP_002210508.1">
    <property type="nucleotide sequence ID" value="NZ_CP009935.1"/>
</dbReference>
<dbReference type="SMR" id="A9R007"/>
<dbReference type="MEROPS" id="A08.001"/>
<dbReference type="GeneID" id="57974134"/>
<dbReference type="KEGG" id="ypg:YpAngola_A0789"/>
<dbReference type="PATRIC" id="fig|349746.12.peg.1737"/>
<dbReference type="UniPathway" id="UPA00665"/>
<dbReference type="GO" id="GO:0005886">
    <property type="term" value="C:plasma membrane"/>
    <property type="evidence" value="ECO:0007669"/>
    <property type="project" value="UniProtKB-SubCell"/>
</dbReference>
<dbReference type="GO" id="GO:0004190">
    <property type="term" value="F:aspartic-type endopeptidase activity"/>
    <property type="evidence" value="ECO:0007669"/>
    <property type="project" value="UniProtKB-UniRule"/>
</dbReference>
<dbReference type="GO" id="GO:0006508">
    <property type="term" value="P:proteolysis"/>
    <property type="evidence" value="ECO:0007669"/>
    <property type="project" value="UniProtKB-KW"/>
</dbReference>
<dbReference type="HAMAP" id="MF_00161">
    <property type="entry name" value="LspA"/>
    <property type="match status" value="1"/>
</dbReference>
<dbReference type="InterPro" id="IPR001872">
    <property type="entry name" value="Peptidase_A8"/>
</dbReference>
<dbReference type="NCBIfam" id="TIGR00077">
    <property type="entry name" value="lspA"/>
    <property type="match status" value="1"/>
</dbReference>
<dbReference type="PANTHER" id="PTHR33695">
    <property type="entry name" value="LIPOPROTEIN SIGNAL PEPTIDASE"/>
    <property type="match status" value="1"/>
</dbReference>
<dbReference type="PANTHER" id="PTHR33695:SF1">
    <property type="entry name" value="LIPOPROTEIN SIGNAL PEPTIDASE"/>
    <property type="match status" value="1"/>
</dbReference>
<dbReference type="Pfam" id="PF01252">
    <property type="entry name" value="Peptidase_A8"/>
    <property type="match status" value="1"/>
</dbReference>
<dbReference type="PRINTS" id="PR00781">
    <property type="entry name" value="LIPOSIGPTASE"/>
</dbReference>
<dbReference type="PROSITE" id="PS00855">
    <property type="entry name" value="SPASE_II"/>
    <property type="match status" value="1"/>
</dbReference>
<name>LSPA_YERPG</name>
<comment type="function">
    <text evidence="1">This protein specifically catalyzes the removal of signal peptides from prolipoproteins.</text>
</comment>
<comment type="catalytic activity">
    <reaction evidence="1">
        <text>Release of signal peptides from bacterial membrane prolipoproteins. Hydrolyzes -Xaa-Yaa-Zaa-|-(S,diacylglyceryl)Cys-, in which Xaa is hydrophobic (preferably Leu), and Yaa (Ala or Ser) and Zaa (Gly or Ala) have small, neutral side chains.</text>
        <dbReference type="EC" id="3.4.23.36"/>
    </reaction>
</comment>
<comment type="pathway">
    <text evidence="1">Protein modification; lipoprotein biosynthesis (signal peptide cleavage).</text>
</comment>
<comment type="subcellular location">
    <subcellularLocation>
        <location evidence="1">Cell inner membrane</location>
        <topology evidence="1">Multi-pass membrane protein</topology>
    </subcellularLocation>
</comment>
<comment type="similarity">
    <text evidence="1">Belongs to the peptidase A8 family.</text>
</comment>
<feature type="chain" id="PRO_1000097289" description="Lipoprotein signal peptidase">
    <location>
        <begin position="1"/>
        <end position="169"/>
    </location>
</feature>
<feature type="transmembrane region" description="Helical" evidence="1">
    <location>
        <begin position="4"/>
        <end position="24"/>
    </location>
</feature>
<feature type="transmembrane region" description="Helical" evidence="1">
    <location>
        <begin position="29"/>
        <end position="49"/>
    </location>
</feature>
<feature type="transmembrane region" description="Helical" evidence="1">
    <location>
        <begin position="70"/>
        <end position="90"/>
    </location>
</feature>
<feature type="transmembrane region" description="Helical" evidence="1">
    <location>
        <begin position="101"/>
        <end position="121"/>
    </location>
</feature>
<feature type="transmembrane region" description="Helical" evidence="1">
    <location>
        <begin position="137"/>
        <end position="157"/>
    </location>
</feature>
<feature type="active site" evidence="1">
    <location>
        <position position="123"/>
    </location>
</feature>
<feature type="active site" evidence="1">
    <location>
        <position position="141"/>
    </location>
</feature>
<keyword id="KW-0064">Aspartyl protease</keyword>
<keyword id="KW-0997">Cell inner membrane</keyword>
<keyword id="KW-1003">Cell membrane</keyword>
<keyword id="KW-0378">Hydrolase</keyword>
<keyword id="KW-0472">Membrane</keyword>
<keyword id="KW-0645">Protease</keyword>
<keyword id="KW-0812">Transmembrane</keyword>
<keyword id="KW-1133">Transmembrane helix</keyword>
<reference key="1">
    <citation type="journal article" date="2010" name="J. Bacteriol.">
        <title>Genome sequence of the deep-rooted Yersinia pestis strain Angola reveals new insights into the evolution and pangenome of the plague bacterium.</title>
        <authorList>
            <person name="Eppinger M."/>
            <person name="Worsham P.L."/>
            <person name="Nikolich M.P."/>
            <person name="Riley D.R."/>
            <person name="Sebastian Y."/>
            <person name="Mou S."/>
            <person name="Achtman M."/>
            <person name="Lindler L.E."/>
            <person name="Ravel J."/>
        </authorList>
    </citation>
    <scope>NUCLEOTIDE SEQUENCE [LARGE SCALE GENOMIC DNA]</scope>
    <source>
        <strain>Angola</strain>
    </source>
</reference>
<protein>
    <recommendedName>
        <fullName evidence="1">Lipoprotein signal peptidase</fullName>
        <ecNumber evidence="1">3.4.23.36</ecNumber>
    </recommendedName>
    <alternativeName>
        <fullName evidence="1">Prolipoprotein signal peptidase</fullName>
    </alternativeName>
    <alternativeName>
        <fullName evidence="1">Signal peptidase II</fullName>
        <shortName evidence="1">SPase II</shortName>
    </alternativeName>
</protein>
<proteinExistence type="inferred from homology"/>
<organism>
    <name type="scientific">Yersinia pestis bv. Antiqua (strain Angola)</name>
    <dbReference type="NCBI Taxonomy" id="349746"/>
    <lineage>
        <taxon>Bacteria</taxon>
        <taxon>Pseudomonadati</taxon>
        <taxon>Pseudomonadota</taxon>
        <taxon>Gammaproteobacteria</taxon>
        <taxon>Enterobacterales</taxon>
        <taxon>Yersiniaceae</taxon>
        <taxon>Yersinia</taxon>
    </lineage>
</organism>
<gene>
    <name evidence="1" type="primary">lspA</name>
    <name type="ordered locus">YpAngola_A0789</name>
</gene>